<reference key="1">
    <citation type="journal article" date="2005" name="Science">
        <title>The transcriptional landscape of the mammalian genome.</title>
        <authorList>
            <person name="Carninci P."/>
            <person name="Kasukawa T."/>
            <person name="Katayama S."/>
            <person name="Gough J."/>
            <person name="Frith M.C."/>
            <person name="Maeda N."/>
            <person name="Oyama R."/>
            <person name="Ravasi T."/>
            <person name="Lenhard B."/>
            <person name="Wells C."/>
            <person name="Kodzius R."/>
            <person name="Shimokawa K."/>
            <person name="Bajic V.B."/>
            <person name="Brenner S.E."/>
            <person name="Batalov S."/>
            <person name="Forrest A.R."/>
            <person name="Zavolan M."/>
            <person name="Davis M.J."/>
            <person name="Wilming L.G."/>
            <person name="Aidinis V."/>
            <person name="Allen J.E."/>
            <person name="Ambesi-Impiombato A."/>
            <person name="Apweiler R."/>
            <person name="Aturaliya R.N."/>
            <person name="Bailey T.L."/>
            <person name="Bansal M."/>
            <person name="Baxter L."/>
            <person name="Beisel K.W."/>
            <person name="Bersano T."/>
            <person name="Bono H."/>
            <person name="Chalk A.M."/>
            <person name="Chiu K.P."/>
            <person name="Choudhary V."/>
            <person name="Christoffels A."/>
            <person name="Clutterbuck D.R."/>
            <person name="Crowe M.L."/>
            <person name="Dalla E."/>
            <person name="Dalrymple B.P."/>
            <person name="de Bono B."/>
            <person name="Della Gatta G."/>
            <person name="di Bernardo D."/>
            <person name="Down T."/>
            <person name="Engstrom P."/>
            <person name="Fagiolini M."/>
            <person name="Faulkner G."/>
            <person name="Fletcher C.F."/>
            <person name="Fukushima T."/>
            <person name="Furuno M."/>
            <person name="Futaki S."/>
            <person name="Gariboldi M."/>
            <person name="Georgii-Hemming P."/>
            <person name="Gingeras T.R."/>
            <person name="Gojobori T."/>
            <person name="Green R.E."/>
            <person name="Gustincich S."/>
            <person name="Harbers M."/>
            <person name="Hayashi Y."/>
            <person name="Hensch T.K."/>
            <person name="Hirokawa N."/>
            <person name="Hill D."/>
            <person name="Huminiecki L."/>
            <person name="Iacono M."/>
            <person name="Ikeo K."/>
            <person name="Iwama A."/>
            <person name="Ishikawa T."/>
            <person name="Jakt M."/>
            <person name="Kanapin A."/>
            <person name="Katoh M."/>
            <person name="Kawasawa Y."/>
            <person name="Kelso J."/>
            <person name="Kitamura H."/>
            <person name="Kitano H."/>
            <person name="Kollias G."/>
            <person name="Krishnan S.P."/>
            <person name="Kruger A."/>
            <person name="Kummerfeld S.K."/>
            <person name="Kurochkin I.V."/>
            <person name="Lareau L.F."/>
            <person name="Lazarevic D."/>
            <person name="Lipovich L."/>
            <person name="Liu J."/>
            <person name="Liuni S."/>
            <person name="McWilliam S."/>
            <person name="Madan Babu M."/>
            <person name="Madera M."/>
            <person name="Marchionni L."/>
            <person name="Matsuda H."/>
            <person name="Matsuzawa S."/>
            <person name="Miki H."/>
            <person name="Mignone F."/>
            <person name="Miyake S."/>
            <person name="Morris K."/>
            <person name="Mottagui-Tabar S."/>
            <person name="Mulder N."/>
            <person name="Nakano N."/>
            <person name="Nakauchi H."/>
            <person name="Ng P."/>
            <person name="Nilsson R."/>
            <person name="Nishiguchi S."/>
            <person name="Nishikawa S."/>
            <person name="Nori F."/>
            <person name="Ohara O."/>
            <person name="Okazaki Y."/>
            <person name="Orlando V."/>
            <person name="Pang K.C."/>
            <person name="Pavan W.J."/>
            <person name="Pavesi G."/>
            <person name="Pesole G."/>
            <person name="Petrovsky N."/>
            <person name="Piazza S."/>
            <person name="Reed J."/>
            <person name="Reid J.F."/>
            <person name="Ring B.Z."/>
            <person name="Ringwald M."/>
            <person name="Rost B."/>
            <person name="Ruan Y."/>
            <person name="Salzberg S.L."/>
            <person name="Sandelin A."/>
            <person name="Schneider C."/>
            <person name="Schoenbach C."/>
            <person name="Sekiguchi K."/>
            <person name="Semple C.A."/>
            <person name="Seno S."/>
            <person name="Sessa L."/>
            <person name="Sheng Y."/>
            <person name="Shibata Y."/>
            <person name="Shimada H."/>
            <person name="Shimada K."/>
            <person name="Silva D."/>
            <person name="Sinclair B."/>
            <person name="Sperling S."/>
            <person name="Stupka E."/>
            <person name="Sugiura K."/>
            <person name="Sultana R."/>
            <person name="Takenaka Y."/>
            <person name="Taki K."/>
            <person name="Tammoja K."/>
            <person name="Tan S.L."/>
            <person name="Tang S."/>
            <person name="Taylor M.S."/>
            <person name="Tegner J."/>
            <person name="Teichmann S.A."/>
            <person name="Ueda H.R."/>
            <person name="van Nimwegen E."/>
            <person name="Verardo R."/>
            <person name="Wei C.L."/>
            <person name="Yagi K."/>
            <person name="Yamanishi H."/>
            <person name="Zabarovsky E."/>
            <person name="Zhu S."/>
            <person name="Zimmer A."/>
            <person name="Hide W."/>
            <person name="Bult C."/>
            <person name="Grimmond S.M."/>
            <person name="Teasdale R.D."/>
            <person name="Liu E.T."/>
            <person name="Brusic V."/>
            <person name="Quackenbush J."/>
            <person name="Wahlestedt C."/>
            <person name="Mattick J.S."/>
            <person name="Hume D.A."/>
            <person name="Kai C."/>
            <person name="Sasaki D."/>
            <person name="Tomaru Y."/>
            <person name="Fukuda S."/>
            <person name="Kanamori-Katayama M."/>
            <person name="Suzuki M."/>
            <person name="Aoki J."/>
            <person name="Arakawa T."/>
            <person name="Iida J."/>
            <person name="Imamura K."/>
            <person name="Itoh M."/>
            <person name="Kato T."/>
            <person name="Kawaji H."/>
            <person name="Kawagashira N."/>
            <person name="Kawashima T."/>
            <person name="Kojima M."/>
            <person name="Kondo S."/>
            <person name="Konno H."/>
            <person name="Nakano K."/>
            <person name="Ninomiya N."/>
            <person name="Nishio T."/>
            <person name="Okada M."/>
            <person name="Plessy C."/>
            <person name="Shibata K."/>
            <person name="Shiraki T."/>
            <person name="Suzuki S."/>
            <person name="Tagami M."/>
            <person name="Waki K."/>
            <person name="Watahiki A."/>
            <person name="Okamura-Oho Y."/>
            <person name="Suzuki H."/>
            <person name="Kawai J."/>
            <person name="Hayashizaki Y."/>
        </authorList>
    </citation>
    <scope>NUCLEOTIDE SEQUENCE [LARGE SCALE MRNA]</scope>
    <source>
        <strain>C57BL/6J</strain>
        <tissue>Bone</tissue>
    </source>
</reference>
<reference key="2">
    <citation type="journal article" date="2009" name="PLoS Biol.">
        <title>Lineage-specific biology revealed by a finished genome assembly of the mouse.</title>
        <authorList>
            <person name="Church D.M."/>
            <person name="Goodstadt L."/>
            <person name="Hillier L.W."/>
            <person name="Zody M.C."/>
            <person name="Goldstein S."/>
            <person name="She X."/>
            <person name="Bult C.J."/>
            <person name="Agarwala R."/>
            <person name="Cherry J.L."/>
            <person name="DiCuccio M."/>
            <person name="Hlavina W."/>
            <person name="Kapustin Y."/>
            <person name="Meric P."/>
            <person name="Maglott D."/>
            <person name="Birtle Z."/>
            <person name="Marques A.C."/>
            <person name="Graves T."/>
            <person name="Zhou S."/>
            <person name="Teague B."/>
            <person name="Potamousis K."/>
            <person name="Churas C."/>
            <person name="Place M."/>
            <person name="Herschleb J."/>
            <person name="Runnheim R."/>
            <person name="Forrest D."/>
            <person name="Amos-Landgraf J."/>
            <person name="Schwartz D.C."/>
            <person name="Cheng Z."/>
            <person name="Lindblad-Toh K."/>
            <person name="Eichler E.E."/>
            <person name="Ponting C.P."/>
        </authorList>
    </citation>
    <scope>NUCLEOTIDE SEQUENCE [LARGE SCALE GENOMIC DNA]</scope>
    <source>
        <strain>C57BL/6J</strain>
    </source>
</reference>
<reference key="3">
    <citation type="submission" date="2009-01" db="UniProtKB">
        <authorList>
            <person name="Lubec G."/>
            <person name="Sunyer B."/>
            <person name="Chen W.-Q."/>
        </authorList>
    </citation>
    <scope>PROTEIN SEQUENCE OF 72-76</scope>
    <scope>IDENTIFICATION BY MASS SPECTROMETRY</scope>
    <source>
        <strain>OF1</strain>
        <tissue>Hippocampus</tissue>
    </source>
</reference>
<reference key="4">
    <citation type="journal article" date="2004" name="Genome Res.">
        <title>The status, quality, and expansion of the NIH full-length cDNA project: the Mammalian Gene Collection (MGC).</title>
        <authorList>
            <consortium name="The MGC Project Team"/>
        </authorList>
    </citation>
    <scope>NUCLEOTIDE SEQUENCE [LARGE SCALE MRNA] OF 81-545</scope>
    <source>
        <strain>C57BL/6J</strain>
        <tissue>Eye</tissue>
    </source>
</reference>
<reference key="5">
    <citation type="journal article" date="2010" name="Cell">
        <title>A tissue-specific atlas of mouse protein phosphorylation and expression.</title>
        <authorList>
            <person name="Huttlin E.L."/>
            <person name="Jedrychowski M.P."/>
            <person name="Elias J.E."/>
            <person name="Goswami T."/>
            <person name="Rad R."/>
            <person name="Beausoleil S.A."/>
            <person name="Villen J."/>
            <person name="Haas W."/>
            <person name="Sowa M.E."/>
            <person name="Gygi S.P."/>
        </authorList>
    </citation>
    <scope>IDENTIFICATION BY MASS SPECTROMETRY [LARGE SCALE ANALYSIS]</scope>
    <source>
        <tissue>Lung</tissue>
    </source>
</reference>
<reference key="6">
    <citation type="journal article" date="2014" name="Mol. Cell. Proteomics">
        <title>Immunoaffinity enrichment and mass spectrometry analysis of protein methylation.</title>
        <authorList>
            <person name="Guo A."/>
            <person name="Gu H."/>
            <person name="Zhou J."/>
            <person name="Mulhern D."/>
            <person name="Wang Y."/>
            <person name="Lee K.A."/>
            <person name="Yang V."/>
            <person name="Aguiar M."/>
            <person name="Kornhauser J."/>
            <person name="Jia X."/>
            <person name="Ren J."/>
            <person name="Beausoleil S.A."/>
            <person name="Silva J.C."/>
            <person name="Vemulapalli V."/>
            <person name="Bedford M.T."/>
            <person name="Comb M.J."/>
        </authorList>
    </citation>
    <scope>IDENTIFICATION BY MASS SPECTROMETRY [LARGE SCALE ANALYSIS]</scope>
    <source>
        <tissue>Brain</tissue>
        <tissue>Embryo</tissue>
    </source>
</reference>
<protein>
    <recommendedName>
        <fullName evidence="1">Coiled-coil domain-containing protein 9B</fullName>
    </recommendedName>
</protein>
<sequence>MISCAEQRSRSRQGEADRAGSGGSSFPPALAPGSCFEILSAPGISMHLAGPHKAESTMRRHEEKDAELDRRIVALRKKNQALLRRYQEIEEDRRQAEQGGMAVTTPGLLQPDSLTVTISQVPGEKRVVSRNWARAPLSPGVTTTLTDDEDAADAPGTFSMGHRVELAVTMENKAKAKRIVSEKPTTQARSPRAKGTSGGGRSWRAPLQMTSSSDSAGKGVLEPRSPGVVSSPPPQQSLGLSPEASWDYTQWKQEREQIDLARLARHRNPQGDWSRPWDLDKAKSMPQNCHKPRDRDLAMGSRKGPRTHQKPQHPPSSLDGKCRGGQSGRPSMTSTIGSNAQGKERLTGRARRYDMKEDEMLQSQEGSQSSTKTPSAEEEFVQKRNEREPDRQETVPATSPIPASPEGLKGESGTSTASLAPDSPQHSDLAPLDLSVGGASSRKPGKSTCILGPKAGAQQSPVSWPNGSEQQTLGCTDHQPGLEVHSCTESQRKAQTPEPMEDRAGKAGAQENLTPRSRPPRGIGPRARGTSKRSRAGGPGPAGRC</sequence>
<evidence type="ECO:0000250" key="1">
    <source>
        <dbReference type="UniProtKB" id="Q6ZUT6"/>
    </source>
</evidence>
<evidence type="ECO:0000255" key="2"/>
<evidence type="ECO:0000256" key="3">
    <source>
        <dbReference type="SAM" id="MobiDB-lite"/>
    </source>
</evidence>
<evidence type="ECO:0000305" key="4"/>
<keyword id="KW-0175">Coiled coil</keyword>
<keyword id="KW-0903">Direct protein sequencing</keyword>
<keyword id="KW-0597">Phosphoprotein</keyword>
<keyword id="KW-1185">Reference proteome</keyword>
<dbReference type="EMBL" id="AK137584">
    <property type="protein sequence ID" value="BAE23419.1"/>
    <property type="molecule type" value="mRNA"/>
</dbReference>
<dbReference type="EMBL" id="AL772255">
    <property type="status" value="NOT_ANNOTATED_CDS"/>
    <property type="molecule type" value="Genomic_DNA"/>
</dbReference>
<dbReference type="EMBL" id="BC075684">
    <property type="protein sequence ID" value="AAH75684.1"/>
    <property type="status" value="ALT_INIT"/>
    <property type="molecule type" value="mRNA"/>
</dbReference>
<dbReference type="RefSeq" id="NP_001001982.2">
    <property type="nucleotide sequence ID" value="NM_001001982.2"/>
</dbReference>
<dbReference type="SMR" id="A3KGF9"/>
<dbReference type="BioGRID" id="229507">
    <property type="interactions" value="1"/>
</dbReference>
<dbReference type="STRING" id="10090.ENSMUSP00000051853"/>
<dbReference type="iPTMnet" id="A3KGF9"/>
<dbReference type="PhosphoSitePlus" id="A3KGF9"/>
<dbReference type="PaxDb" id="10090-ENSMUSP00000051853"/>
<dbReference type="PeptideAtlas" id="A3KGF9"/>
<dbReference type="ProteomicsDB" id="265367"/>
<dbReference type="Pumba" id="A3KGF9"/>
<dbReference type="Antibodypedia" id="52258">
    <property type="antibodies" value="49 antibodies from 9 providers"/>
</dbReference>
<dbReference type="DNASU" id="214239"/>
<dbReference type="GeneID" id="214239"/>
<dbReference type="KEGG" id="mmu:214239"/>
<dbReference type="UCSC" id="uc008lsn.1">
    <property type="organism name" value="mouse"/>
</dbReference>
<dbReference type="AGR" id="MGI:2685199"/>
<dbReference type="CTD" id="388115"/>
<dbReference type="MGI" id="MGI:2685199">
    <property type="gene designation" value="Ccdc9b"/>
</dbReference>
<dbReference type="VEuPathDB" id="HostDB:ENSMUSG00000045838"/>
<dbReference type="eggNOG" id="ENOG502S0JY">
    <property type="taxonomic scope" value="Eukaryota"/>
</dbReference>
<dbReference type="HOGENOM" id="CLU_026009_0_0_1"/>
<dbReference type="InParanoid" id="A3KGF9"/>
<dbReference type="OMA" id="GPPEVGW"/>
<dbReference type="PhylomeDB" id="A3KGF9"/>
<dbReference type="TreeFam" id="TF336272"/>
<dbReference type="BioGRID-ORCS" id="214239">
    <property type="hits" value="2 hits in 77 CRISPR screens"/>
</dbReference>
<dbReference type="PRO" id="PR:A3KGF9"/>
<dbReference type="Proteomes" id="UP000000589">
    <property type="component" value="Chromosome 2"/>
</dbReference>
<dbReference type="RNAct" id="A3KGF9">
    <property type="molecule type" value="protein"/>
</dbReference>
<dbReference type="Bgee" id="ENSMUSG00000045838">
    <property type="expression patterns" value="Expressed in hindlimb stylopod muscle and 49 other cell types or tissues"/>
</dbReference>
<dbReference type="InterPro" id="IPR029336">
    <property type="entry name" value="DUF4594"/>
</dbReference>
<dbReference type="PANTHER" id="PTHR15635">
    <property type="entry name" value="COILED-COIL DOMAIN CONTAINING PROTEIN 9"/>
    <property type="match status" value="1"/>
</dbReference>
<dbReference type="PANTHER" id="PTHR15635:SF10">
    <property type="entry name" value="COILED-COIL DOMAIN-CONTAINING PROTEIN 9B"/>
    <property type="match status" value="1"/>
</dbReference>
<dbReference type="Pfam" id="PF15266">
    <property type="entry name" value="DUF4594"/>
    <property type="match status" value="1"/>
</dbReference>
<comment type="sequence caution" evidence="4">
    <conflict type="erroneous initiation">
        <sequence resource="EMBL-CDS" id="AAH75684"/>
    </conflict>
</comment>
<name>CCD9B_MOUSE</name>
<proteinExistence type="evidence at protein level"/>
<gene>
    <name evidence="1" type="primary">Ccdc9b</name>
</gene>
<feature type="chain" id="PRO_0000295734" description="Coiled-coil domain-containing protein 9B">
    <location>
        <begin position="1"/>
        <end position="545"/>
    </location>
</feature>
<feature type="region of interest" description="Disordered" evidence="3">
    <location>
        <begin position="1"/>
        <end position="32"/>
    </location>
</feature>
<feature type="region of interest" description="Disordered" evidence="3">
    <location>
        <begin position="175"/>
        <end position="245"/>
    </location>
</feature>
<feature type="region of interest" description="Disordered" evidence="3">
    <location>
        <begin position="262"/>
        <end position="545"/>
    </location>
</feature>
<feature type="coiled-coil region" evidence="2">
    <location>
        <begin position="52"/>
        <end position="99"/>
    </location>
</feature>
<feature type="compositionally biased region" description="Basic and acidic residues" evidence="3">
    <location>
        <begin position="7"/>
        <end position="18"/>
    </location>
</feature>
<feature type="compositionally biased region" description="Low complexity" evidence="3">
    <location>
        <begin position="225"/>
        <end position="242"/>
    </location>
</feature>
<feature type="compositionally biased region" description="Polar residues" evidence="3">
    <location>
        <begin position="328"/>
        <end position="341"/>
    </location>
</feature>
<feature type="compositionally biased region" description="Basic and acidic residues" evidence="3">
    <location>
        <begin position="342"/>
        <end position="359"/>
    </location>
</feature>
<feature type="compositionally biased region" description="Polar residues" evidence="3">
    <location>
        <begin position="361"/>
        <end position="374"/>
    </location>
</feature>
<feature type="compositionally biased region" description="Basic and acidic residues" evidence="3">
    <location>
        <begin position="380"/>
        <end position="393"/>
    </location>
</feature>
<feature type="compositionally biased region" description="Polar residues" evidence="3">
    <location>
        <begin position="457"/>
        <end position="474"/>
    </location>
</feature>
<feature type="modified residue" description="Phosphoserine" evidence="1">
    <location>
        <position position="404"/>
    </location>
</feature>
<feature type="sequence conflict" description="In Ref. 1; BAE23419." evidence="4" ref="1">
    <original>A</original>
    <variation>T</variation>
    <location>
        <position position="151"/>
    </location>
</feature>
<accession>A3KGF9</accession>
<accession>Q3UV54</accession>
<accession>Q6DI90</accession>
<organism>
    <name type="scientific">Mus musculus</name>
    <name type="common">Mouse</name>
    <dbReference type="NCBI Taxonomy" id="10090"/>
    <lineage>
        <taxon>Eukaryota</taxon>
        <taxon>Metazoa</taxon>
        <taxon>Chordata</taxon>
        <taxon>Craniata</taxon>
        <taxon>Vertebrata</taxon>
        <taxon>Euteleostomi</taxon>
        <taxon>Mammalia</taxon>
        <taxon>Eutheria</taxon>
        <taxon>Euarchontoglires</taxon>
        <taxon>Glires</taxon>
        <taxon>Rodentia</taxon>
        <taxon>Myomorpha</taxon>
        <taxon>Muroidea</taxon>
        <taxon>Muridae</taxon>
        <taxon>Murinae</taxon>
        <taxon>Mus</taxon>
        <taxon>Mus</taxon>
    </lineage>
</organism>